<feature type="chain" id="PRO_0000225756" description="Large ribosomal subunit protein bL32">
    <location>
        <begin position="1"/>
        <end position="59"/>
    </location>
</feature>
<feature type="region of interest" description="Disordered" evidence="2">
    <location>
        <begin position="1"/>
        <end position="59"/>
    </location>
</feature>
<feature type="compositionally biased region" description="Basic residues" evidence="2">
    <location>
        <begin position="9"/>
        <end position="19"/>
    </location>
</feature>
<feature type="compositionally biased region" description="Basic residues" evidence="2">
    <location>
        <begin position="49"/>
        <end position="59"/>
    </location>
</feature>
<organism>
    <name type="scientific">Cupriavidus pinatubonensis (strain JMP 134 / LMG 1197)</name>
    <name type="common">Cupriavidus necator (strain JMP 134)</name>
    <dbReference type="NCBI Taxonomy" id="264198"/>
    <lineage>
        <taxon>Bacteria</taxon>
        <taxon>Pseudomonadati</taxon>
        <taxon>Pseudomonadota</taxon>
        <taxon>Betaproteobacteria</taxon>
        <taxon>Burkholderiales</taxon>
        <taxon>Burkholderiaceae</taxon>
        <taxon>Cupriavidus</taxon>
    </lineage>
</organism>
<reference key="1">
    <citation type="journal article" date="2010" name="PLoS ONE">
        <title>The complete multipartite genome sequence of Cupriavidus necator JMP134, a versatile pollutant degrader.</title>
        <authorList>
            <person name="Lykidis A."/>
            <person name="Perez-Pantoja D."/>
            <person name="Ledger T."/>
            <person name="Mavromatis K."/>
            <person name="Anderson I.J."/>
            <person name="Ivanova N.N."/>
            <person name="Hooper S.D."/>
            <person name="Lapidus A."/>
            <person name="Lucas S."/>
            <person name="Gonzalez B."/>
            <person name="Kyrpides N.C."/>
        </authorList>
    </citation>
    <scope>NUCLEOTIDE SEQUENCE [LARGE SCALE GENOMIC DNA]</scope>
    <source>
        <strain>JMP134 / LMG 1197</strain>
    </source>
</reference>
<name>RL32_CUPPJ</name>
<evidence type="ECO:0000255" key="1">
    <source>
        <dbReference type="HAMAP-Rule" id="MF_00340"/>
    </source>
</evidence>
<evidence type="ECO:0000256" key="2">
    <source>
        <dbReference type="SAM" id="MobiDB-lite"/>
    </source>
</evidence>
<evidence type="ECO:0000305" key="3"/>
<gene>
    <name evidence="1" type="primary">rpmF</name>
    <name type="ordered locus">Reut_A2267</name>
</gene>
<proteinExistence type="inferred from homology"/>
<sequence>MAVQQNKKSPSKRGMHRSHDHLSVAPLAVEPTTGETHLRHHVSPNGYYRGRKVIKTKND</sequence>
<dbReference type="EMBL" id="CP000090">
    <property type="protein sequence ID" value="AAZ61630.1"/>
    <property type="molecule type" value="Genomic_DNA"/>
</dbReference>
<dbReference type="SMR" id="Q46Z03"/>
<dbReference type="STRING" id="264198.Reut_A2267"/>
<dbReference type="KEGG" id="reu:Reut_A2267"/>
<dbReference type="eggNOG" id="COG0333">
    <property type="taxonomic scope" value="Bacteria"/>
</dbReference>
<dbReference type="HOGENOM" id="CLU_129084_2_1_4"/>
<dbReference type="OrthoDB" id="9801927at2"/>
<dbReference type="GO" id="GO:0015934">
    <property type="term" value="C:large ribosomal subunit"/>
    <property type="evidence" value="ECO:0007669"/>
    <property type="project" value="InterPro"/>
</dbReference>
<dbReference type="GO" id="GO:0003735">
    <property type="term" value="F:structural constituent of ribosome"/>
    <property type="evidence" value="ECO:0007669"/>
    <property type="project" value="InterPro"/>
</dbReference>
<dbReference type="GO" id="GO:0006412">
    <property type="term" value="P:translation"/>
    <property type="evidence" value="ECO:0007669"/>
    <property type="project" value="UniProtKB-UniRule"/>
</dbReference>
<dbReference type="HAMAP" id="MF_00340">
    <property type="entry name" value="Ribosomal_bL32"/>
    <property type="match status" value="1"/>
</dbReference>
<dbReference type="InterPro" id="IPR002677">
    <property type="entry name" value="Ribosomal_bL32"/>
</dbReference>
<dbReference type="InterPro" id="IPR044957">
    <property type="entry name" value="Ribosomal_bL32_bact"/>
</dbReference>
<dbReference type="InterPro" id="IPR011332">
    <property type="entry name" value="Ribosomal_zn-bd"/>
</dbReference>
<dbReference type="NCBIfam" id="TIGR01031">
    <property type="entry name" value="rpmF_bact"/>
    <property type="match status" value="1"/>
</dbReference>
<dbReference type="PANTHER" id="PTHR35534">
    <property type="entry name" value="50S RIBOSOMAL PROTEIN L32"/>
    <property type="match status" value="1"/>
</dbReference>
<dbReference type="PANTHER" id="PTHR35534:SF1">
    <property type="entry name" value="LARGE RIBOSOMAL SUBUNIT PROTEIN BL32"/>
    <property type="match status" value="1"/>
</dbReference>
<dbReference type="Pfam" id="PF01783">
    <property type="entry name" value="Ribosomal_L32p"/>
    <property type="match status" value="1"/>
</dbReference>
<dbReference type="SUPFAM" id="SSF57829">
    <property type="entry name" value="Zn-binding ribosomal proteins"/>
    <property type="match status" value="1"/>
</dbReference>
<accession>Q46Z03</accession>
<keyword id="KW-0687">Ribonucleoprotein</keyword>
<keyword id="KW-0689">Ribosomal protein</keyword>
<protein>
    <recommendedName>
        <fullName evidence="1">Large ribosomal subunit protein bL32</fullName>
    </recommendedName>
    <alternativeName>
        <fullName evidence="3">50S ribosomal protein L32</fullName>
    </alternativeName>
</protein>
<comment type="similarity">
    <text evidence="1">Belongs to the bacterial ribosomal protein bL32 family.</text>
</comment>